<accession>A5WUN7</accession>
<proteinExistence type="inferred from homology"/>
<organism>
    <name type="scientific">Danio rerio</name>
    <name type="common">Zebrafish</name>
    <name type="synonym">Brachydanio rerio</name>
    <dbReference type="NCBI Taxonomy" id="7955"/>
    <lineage>
        <taxon>Eukaryota</taxon>
        <taxon>Metazoa</taxon>
        <taxon>Chordata</taxon>
        <taxon>Craniata</taxon>
        <taxon>Vertebrata</taxon>
        <taxon>Euteleostomi</taxon>
        <taxon>Actinopterygii</taxon>
        <taxon>Neopterygii</taxon>
        <taxon>Teleostei</taxon>
        <taxon>Ostariophysi</taxon>
        <taxon>Cypriniformes</taxon>
        <taxon>Danionidae</taxon>
        <taxon>Danioninae</taxon>
        <taxon>Danio</taxon>
    </lineage>
</organism>
<comment type="function">
    <text evidence="1">Key microtubule-organizing protein that specifically binds the minus-end of non-centrosomal microtubules and regulates their dynamics and organization. Specifically recognizes growing microtubule minus-ends and stabilizes microtubules. Acts on free microtubule minus-ends that are not capped by microtubule-nucleating proteins or other factors and protects microtubule minus-ends from depolymerization. In contrast to camsap2 and camsap3, tracks along the growing tips of minus-end microtubules without significantly affecting the polymerization rate: binds at the very tip of the microtubules minus-end and acts as a minus-end tracking protein (-TIP) that dissociates from microtubules after allowing tubulin incorporation. Through interaction with spectrin may regulate neurite outgrowth.</text>
</comment>
<comment type="subcellular location">
    <subcellularLocation>
        <location evidence="1">Cytoplasm</location>
        <location evidence="1">Cytoskeleton</location>
    </subcellularLocation>
    <text evidence="1">Associates with the minus-end of microtubules. In contrast to camsap2 and camsap3, does not form stretches of decorated microtubule minus-ends.</text>
</comment>
<comment type="domain">
    <text evidence="4">The CKK domain binds microtubules.</text>
</comment>
<comment type="similarity">
    <text evidence="4">Belongs to the CAMSAP1 family.</text>
</comment>
<reference key="1">
    <citation type="journal article" date="2013" name="Nature">
        <title>The zebrafish reference genome sequence and its relationship to the human genome.</title>
        <authorList>
            <person name="Howe K."/>
            <person name="Clark M.D."/>
            <person name="Torroja C.F."/>
            <person name="Torrance J."/>
            <person name="Berthelot C."/>
            <person name="Muffato M."/>
            <person name="Collins J.E."/>
            <person name="Humphray S."/>
            <person name="McLaren K."/>
            <person name="Matthews L."/>
            <person name="McLaren S."/>
            <person name="Sealy I."/>
            <person name="Caccamo M."/>
            <person name="Churcher C."/>
            <person name="Scott C."/>
            <person name="Barrett J.C."/>
            <person name="Koch R."/>
            <person name="Rauch G.J."/>
            <person name="White S."/>
            <person name="Chow W."/>
            <person name="Kilian B."/>
            <person name="Quintais L.T."/>
            <person name="Guerra-Assuncao J.A."/>
            <person name="Zhou Y."/>
            <person name="Gu Y."/>
            <person name="Yen J."/>
            <person name="Vogel J.H."/>
            <person name="Eyre T."/>
            <person name="Redmond S."/>
            <person name="Banerjee R."/>
            <person name="Chi J."/>
            <person name="Fu B."/>
            <person name="Langley E."/>
            <person name="Maguire S.F."/>
            <person name="Laird G.K."/>
            <person name="Lloyd D."/>
            <person name="Kenyon E."/>
            <person name="Donaldson S."/>
            <person name="Sehra H."/>
            <person name="Almeida-King J."/>
            <person name="Loveland J."/>
            <person name="Trevanion S."/>
            <person name="Jones M."/>
            <person name="Quail M."/>
            <person name="Willey D."/>
            <person name="Hunt A."/>
            <person name="Burton J."/>
            <person name="Sims S."/>
            <person name="McLay K."/>
            <person name="Plumb B."/>
            <person name="Davis J."/>
            <person name="Clee C."/>
            <person name="Oliver K."/>
            <person name="Clark R."/>
            <person name="Riddle C."/>
            <person name="Elliot D."/>
            <person name="Threadgold G."/>
            <person name="Harden G."/>
            <person name="Ware D."/>
            <person name="Begum S."/>
            <person name="Mortimore B."/>
            <person name="Kerry G."/>
            <person name="Heath P."/>
            <person name="Phillimore B."/>
            <person name="Tracey A."/>
            <person name="Corby N."/>
            <person name="Dunn M."/>
            <person name="Johnson C."/>
            <person name="Wood J."/>
            <person name="Clark S."/>
            <person name="Pelan S."/>
            <person name="Griffiths G."/>
            <person name="Smith M."/>
            <person name="Glithero R."/>
            <person name="Howden P."/>
            <person name="Barker N."/>
            <person name="Lloyd C."/>
            <person name="Stevens C."/>
            <person name="Harley J."/>
            <person name="Holt K."/>
            <person name="Panagiotidis G."/>
            <person name="Lovell J."/>
            <person name="Beasley H."/>
            <person name="Henderson C."/>
            <person name="Gordon D."/>
            <person name="Auger K."/>
            <person name="Wright D."/>
            <person name="Collins J."/>
            <person name="Raisen C."/>
            <person name="Dyer L."/>
            <person name="Leung K."/>
            <person name="Robertson L."/>
            <person name="Ambridge K."/>
            <person name="Leongamornlert D."/>
            <person name="McGuire S."/>
            <person name="Gilderthorp R."/>
            <person name="Griffiths C."/>
            <person name="Manthravadi D."/>
            <person name="Nichol S."/>
            <person name="Barker G."/>
            <person name="Whitehead S."/>
            <person name="Kay M."/>
            <person name="Brown J."/>
            <person name="Murnane C."/>
            <person name="Gray E."/>
            <person name="Humphries M."/>
            <person name="Sycamore N."/>
            <person name="Barker D."/>
            <person name="Saunders D."/>
            <person name="Wallis J."/>
            <person name="Babbage A."/>
            <person name="Hammond S."/>
            <person name="Mashreghi-Mohammadi M."/>
            <person name="Barr L."/>
            <person name="Martin S."/>
            <person name="Wray P."/>
            <person name="Ellington A."/>
            <person name="Matthews N."/>
            <person name="Ellwood M."/>
            <person name="Woodmansey R."/>
            <person name="Clark G."/>
            <person name="Cooper J."/>
            <person name="Tromans A."/>
            <person name="Grafham D."/>
            <person name="Skuce C."/>
            <person name="Pandian R."/>
            <person name="Andrews R."/>
            <person name="Harrison E."/>
            <person name="Kimberley A."/>
            <person name="Garnett J."/>
            <person name="Fosker N."/>
            <person name="Hall R."/>
            <person name="Garner P."/>
            <person name="Kelly D."/>
            <person name="Bird C."/>
            <person name="Palmer S."/>
            <person name="Gehring I."/>
            <person name="Berger A."/>
            <person name="Dooley C.M."/>
            <person name="Ersan-Urun Z."/>
            <person name="Eser C."/>
            <person name="Geiger H."/>
            <person name="Geisler M."/>
            <person name="Karotki L."/>
            <person name="Kirn A."/>
            <person name="Konantz J."/>
            <person name="Konantz M."/>
            <person name="Oberlander M."/>
            <person name="Rudolph-Geiger S."/>
            <person name="Teucke M."/>
            <person name="Lanz C."/>
            <person name="Raddatz G."/>
            <person name="Osoegawa K."/>
            <person name="Zhu B."/>
            <person name="Rapp A."/>
            <person name="Widaa S."/>
            <person name="Langford C."/>
            <person name="Yang F."/>
            <person name="Schuster S.C."/>
            <person name="Carter N.P."/>
            <person name="Harrow J."/>
            <person name="Ning Z."/>
            <person name="Herrero J."/>
            <person name="Searle S.M."/>
            <person name="Enright A."/>
            <person name="Geisler R."/>
            <person name="Plasterk R.H."/>
            <person name="Lee C."/>
            <person name="Westerfield M."/>
            <person name="de Jong P.J."/>
            <person name="Zon L.I."/>
            <person name="Postlethwait J.H."/>
            <person name="Nusslein-Volhard C."/>
            <person name="Hubbard T.J."/>
            <person name="Roest Crollius H."/>
            <person name="Rogers J."/>
            <person name="Stemple D.L."/>
        </authorList>
    </citation>
    <scope>NUCLEOTIDE SEQUENCE [LARGE SCALE GENOMIC DNA]</scope>
    <source>
        <strain>Tuebingen</strain>
    </source>
</reference>
<feature type="chain" id="PRO_0000316830" description="Calmodulin-regulated spectrin-associated protein 1-B">
    <location>
        <begin position="1"/>
        <end position="1558"/>
    </location>
</feature>
<feature type="domain" description="Calponin-homology (CH)" evidence="3">
    <location>
        <begin position="231"/>
        <end position="346"/>
    </location>
</feature>
<feature type="domain" description="CKK" evidence="4">
    <location>
        <begin position="1421"/>
        <end position="1555"/>
    </location>
</feature>
<feature type="region of interest" description="Disordered" evidence="5">
    <location>
        <begin position="400"/>
        <end position="464"/>
    </location>
</feature>
<feature type="region of interest" description="Disordered" evidence="5">
    <location>
        <begin position="504"/>
        <end position="523"/>
    </location>
</feature>
<feature type="region of interest" description="Disordered" evidence="5">
    <location>
        <begin position="551"/>
        <end position="585"/>
    </location>
</feature>
<feature type="region of interest" description="Disordered" evidence="5">
    <location>
        <begin position="602"/>
        <end position="675"/>
    </location>
</feature>
<feature type="region of interest" description="Disordered" evidence="5">
    <location>
        <begin position="737"/>
        <end position="790"/>
    </location>
</feature>
<feature type="region of interest" description="Disordered" evidence="5">
    <location>
        <begin position="803"/>
        <end position="850"/>
    </location>
</feature>
<feature type="region of interest" description="Disordered" evidence="5">
    <location>
        <begin position="943"/>
        <end position="968"/>
    </location>
</feature>
<feature type="region of interest" description="Disordered" evidence="5">
    <location>
        <begin position="1041"/>
        <end position="1131"/>
    </location>
</feature>
<feature type="region of interest" description="Disordered" evidence="5">
    <location>
        <begin position="1257"/>
        <end position="1293"/>
    </location>
</feature>
<feature type="region of interest" description="Disordered" evidence="5">
    <location>
        <begin position="1305"/>
        <end position="1344"/>
    </location>
</feature>
<feature type="region of interest" description="Disordered" evidence="5">
    <location>
        <begin position="1360"/>
        <end position="1414"/>
    </location>
</feature>
<feature type="coiled-coil region" evidence="2">
    <location>
        <begin position="849"/>
        <end position="887"/>
    </location>
</feature>
<feature type="coiled-coil region" evidence="2">
    <location>
        <begin position="971"/>
        <end position="1004"/>
    </location>
</feature>
<feature type="coiled-coil region" evidence="2">
    <location>
        <begin position="1243"/>
        <end position="1303"/>
    </location>
</feature>
<feature type="compositionally biased region" description="Polar residues" evidence="5">
    <location>
        <begin position="400"/>
        <end position="417"/>
    </location>
</feature>
<feature type="compositionally biased region" description="Polar residues" evidence="5">
    <location>
        <begin position="440"/>
        <end position="450"/>
    </location>
</feature>
<feature type="compositionally biased region" description="Polar residues" evidence="5">
    <location>
        <begin position="504"/>
        <end position="516"/>
    </location>
</feature>
<feature type="compositionally biased region" description="Basic and acidic residues" evidence="5">
    <location>
        <begin position="602"/>
        <end position="620"/>
    </location>
</feature>
<feature type="compositionally biased region" description="Polar residues" evidence="5">
    <location>
        <begin position="643"/>
        <end position="658"/>
    </location>
</feature>
<feature type="compositionally biased region" description="Basic and acidic residues" evidence="5">
    <location>
        <begin position="737"/>
        <end position="772"/>
    </location>
</feature>
<feature type="compositionally biased region" description="Low complexity" evidence="5">
    <location>
        <begin position="776"/>
        <end position="790"/>
    </location>
</feature>
<feature type="compositionally biased region" description="Low complexity" evidence="5">
    <location>
        <begin position="812"/>
        <end position="822"/>
    </location>
</feature>
<feature type="compositionally biased region" description="Basic and acidic residues" evidence="5">
    <location>
        <begin position="943"/>
        <end position="955"/>
    </location>
</feature>
<feature type="compositionally biased region" description="Low complexity" evidence="5">
    <location>
        <begin position="1080"/>
        <end position="1090"/>
    </location>
</feature>
<feature type="compositionally biased region" description="Polar residues" evidence="5">
    <location>
        <begin position="1106"/>
        <end position="1115"/>
    </location>
</feature>
<feature type="compositionally biased region" description="Basic residues" evidence="5">
    <location>
        <begin position="1317"/>
        <end position="1328"/>
    </location>
</feature>
<keyword id="KW-0175">Coiled coil</keyword>
<keyword id="KW-0963">Cytoplasm</keyword>
<keyword id="KW-0206">Cytoskeleton</keyword>
<keyword id="KW-0493">Microtubule</keyword>
<keyword id="KW-1185">Reference proteome</keyword>
<protein>
    <recommendedName>
        <fullName>Calmodulin-regulated spectrin-associated protein 1-B</fullName>
    </recommendedName>
</protein>
<gene>
    <name type="primary">camsap1b</name>
    <name type="ORF">si:dkey-157g20.3</name>
</gene>
<name>CAM1B_DANRE</name>
<evidence type="ECO:0000250" key="1">
    <source>
        <dbReference type="UniProtKB" id="Q5T5Y3"/>
    </source>
</evidence>
<evidence type="ECO:0000255" key="2"/>
<evidence type="ECO:0000255" key="3">
    <source>
        <dbReference type="PROSITE-ProRule" id="PRU00044"/>
    </source>
</evidence>
<evidence type="ECO:0000255" key="4">
    <source>
        <dbReference type="PROSITE-ProRule" id="PRU00841"/>
    </source>
</evidence>
<evidence type="ECO:0000256" key="5">
    <source>
        <dbReference type="SAM" id="MobiDB-lite"/>
    </source>
</evidence>
<dbReference type="EMBL" id="CR396583">
    <property type="protein sequence ID" value="CAN88213.1"/>
    <property type="molecule type" value="Genomic_DNA"/>
</dbReference>
<dbReference type="EMBL" id="CT971581">
    <property type="protein sequence ID" value="CAN88213.1"/>
    <property type="status" value="JOINED"/>
    <property type="molecule type" value="Genomic_DNA"/>
</dbReference>
<dbReference type="EMBL" id="CT971581">
    <property type="protein sequence ID" value="CAN88254.1"/>
    <property type="molecule type" value="Genomic_DNA"/>
</dbReference>
<dbReference type="EMBL" id="CR396583">
    <property type="protein sequence ID" value="CAN88254.1"/>
    <property type="status" value="JOINED"/>
    <property type="molecule type" value="Genomic_DNA"/>
</dbReference>
<dbReference type="RefSeq" id="NP_001093471.1">
    <property type="nucleotide sequence ID" value="NM_001100001.3"/>
</dbReference>
<dbReference type="SMR" id="A5WUN7"/>
<dbReference type="FunCoup" id="A5WUN7">
    <property type="interactions" value="1882"/>
</dbReference>
<dbReference type="STRING" id="7955.ENSDARP00000118745"/>
<dbReference type="PaxDb" id="7955-ENSDARP00000118745"/>
<dbReference type="PeptideAtlas" id="A5WUN7"/>
<dbReference type="Ensembl" id="ENSDART00000147707">
    <property type="protein sequence ID" value="ENSDARP00000118745"/>
    <property type="gene ID" value="ENSDARG00000035122"/>
</dbReference>
<dbReference type="GeneID" id="561094"/>
<dbReference type="KEGG" id="dre:561094"/>
<dbReference type="AGR" id="ZFIN:ZDB-GENE-070705-301"/>
<dbReference type="CTD" id="561094"/>
<dbReference type="ZFIN" id="ZDB-GENE-070705-301">
    <property type="gene designation" value="camsap1b"/>
</dbReference>
<dbReference type="eggNOG" id="KOG3654">
    <property type="taxonomic scope" value="Eukaryota"/>
</dbReference>
<dbReference type="InParanoid" id="A5WUN7"/>
<dbReference type="OMA" id="GTEWRAS"/>
<dbReference type="OrthoDB" id="2125658at2759"/>
<dbReference type="PhylomeDB" id="A5WUN7"/>
<dbReference type="TreeFam" id="TF315529"/>
<dbReference type="PRO" id="PR:A5WUN7"/>
<dbReference type="Proteomes" id="UP000000437">
    <property type="component" value="Chromosome 5"/>
</dbReference>
<dbReference type="Bgee" id="ENSDARG00000035122">
    <property type="expression patterns" value="Expressed in early embryo and 24 other cell types or tissues"/>
</dbReference>
<dbReference type="GO" id="GO:0005737">
    <property type="term" value="C:cytoplasm"/>
    <property type="evidence" value="ECO:0007669"/>
    <property type="project" value="UniProtKB-KW"/>
</dbReference>
<dbReference type="GO" id="GO:0005874">
    <property type="term" value="C:microtubule"/>
    <property type="evidence" value="ECO:0000250"/>
    <property type="project" value="UniProtKB"/>
</dbReference>
<dbReference type="GO" id="GO:0005516">
    <property type="term" value="F:calmodulin binding"/>
    <property type="evidence" value="ECO:0007669"/>
    <property type="project" value="InterPro"/>
</dbReference>
<dbReference type="GO" id="GO:0008017">
    <property type="term" value="F:microtubule binding"/>
    <property type="evidence" value="ECO:0000250"/>
    <property type="project" value="UniProtKB"/>
</dbReference>
<dbReference type="GO" id="GO:0051011">
    <property type="term" value="F:microtubule minus-end binding"/>
    <property type="evidence" value="ECO:0000250"/>
    <property type="project" value="UniProtKB"/>
</dbReference>
<dbReference type="GO" id="GO:0030507">
    <property type="term" value="F:spectrin binding"/>
    <property type="evidence" value="ECO:0007669"/>
    <property type="project" value="InterPro"/>
</dbReference>
<dbReference type="GO" id="GO:0031122">
    <property type="term" value="P:cytoplasmic microtubule organization"/>
    <property type="evidence" value="ECO:0000318"/>
    <property type="project" value="GO_Central"/>
</dbReference>
<dbReference type="GO" id="GO:0007010">
    <property type="term" value="P:cytoskeleton organization"/>
    <property type="evidence" value="ECO:0000250"/>
    <property type="project" value="UniProtKB"/>
</dbReference>
<dbReference type="GO" id="GO:0000226">
    <property type="term" value="P:microtubule cytoskeleton organization"/>
    <property type="evidence" value="ECO:0000250"/>
    <property type="project" value="UniProtKB"/>
</dbReference>
<dbReference type="GO" id="GO:0007026">
    <property type="term" value="P:negative regulation of microtubule depolymerization"/>
    <property type="evidence" value="ECO:0000318"/>
    <property type="project" value="GO_Central"/>
</dbReference>
<dbReference type="GO" id="GO:0031175">
    <property type="term" value="P:neuron projection development"/>
    <property type="evidence" value="ECO:0000250"/>
    <property type="project" value="UniProtKB"/>
</dbReference>
<dbReference type="GO" id="GO:0022604">
    <property type="term" value="P:regulation of cell morphogenesis"/>
    <property type="evidence" value="ECO:0000250"/>
    <property type="project" value="UniProtKB"/>
</dbReference>
<dbReference type="GO" id="GO:0031113">
    <property type="term" value="P:regulation of microtubule polymerization"/>
    <property type="evidence" value="ECO:0000250"/>
    <property type="project" value="UniProtKB"/>
</dbReference>
<dbReference type="FunFam" id="1.10.418.10:FF:000070">
    <property type="entry name" value="Calmodulin regulated spectrin-associated protein 1b"/>
    <property type="match status" value="1"/>
</dbReference>
<dbReference type="FunFam" id="3.10.20.360:FF:000001">
    <property type="entry name" value="Calmodulin-regulated spectrin-associated protein 3 isoform 2"/>
    <property type="match status" value="1"/>
</dbReference>
<dbReference type="Gene3D" id="1.10.418.10">
    <property type="entry name" value="Calponin-like domain"/>
    <property type="match status" value="1"/>
</dbReference>
<dbReference type="Gene3D" id="3.10.20.360">
    <property type="entry name" value="CKK domain"/>
    <property type="match status" value="1"/>
</dbReference>
<dbReference type="InterPro" id="IPR032940">
    <property type="entry name" value="CAMSAP"/>
</dbReference>
<dbReference type="InterPro" id="IPR022613">
    <property type="entry name" value="CAMSAP-like_CH_dom"/>
</dbReference>
<dbReference type="InterPro" id="IPR031372">
    <property type="entry name" value="CAMSAP_CC1"/>
</dbReference>
<dbReference type="InterPro" id="IPR001715">
    <property type="entry name" value="CH_dom"/>
</dbReference>
<dbReference type="InterPro" id="IPR036872">
    <property type="entry name" value="CH_dom_sf"/>
</dbReference>
<dbReference type="InterPro" id="IPR038209">
    <property type="entry name" value="CKK_dom_sf"/>
</dbReference>
<dbReference type="InterPro" id="IPR014797">
    <property type="entry name" value="CKK_domain"/>
</dbReference>
<dbReference type="InterPro" id="IPR011033">
    <property type="entry name" value="PRC_barrel-like_sf"/>
</dbReference>
<dbReference type="PANTHER" id="PTHR21595:SF3">
    <property type="entry name" value="CALMODULIN-REGULATED SPECTRIN-ASSOCIATED PROTEIN 1"/>
    <property type="match status" value="1"/>
</dbReference>
<dbReference type="PANTHER" id="PTHR21595">
    <property type="entry name" value="PATRONIN"/>
    <property type="match status" value="1"/>
</dbReference>
<dbReference type="Pfam" id="PF17095">
    <property type="entry name" value="CAMSAP_CC1"/>
    <property type="match status" value="1"/>
</dbReference>
<dbReference type="Pfam" id="PF11971">
    <property type="entry name" value="CAMSAP_CH"/>
    <property type="match status" value="1"/>
</dbReference>
<dbReference type="Pfam" id="PF08683">
    <property type="entry name" value="CAMSAP_CKK"/>
    <property type="match status" value="1"/>
</dbReference>
<dbReference type="SMART" id="SM01051">
    <property type="entry name" value="CAMSAP_CKK"/>
    <property type="match status" value="1"/>
</dbReference>
<dbReference type="SUPFAM" id="SSF47576">
    <property type="entry name" value="Calponin-homology domain, CH-domain"/>
    <property type="match status" value="1"/>
</dbReference>
<dbReference type="SUPFAM" id="SSF50346">
    <property type="entry name" value="PRC-barrel domain"/>
    <property type="match status" value="1"/>
</dbReference>
<dbReference type="PROSITE" id="PS50021">
    <property type="entry name" value="CH"/>
    <property type="match status" value="1"/>
</dbReference>
<dbReference type="PROSITE" id="PS51508">
    <property type="entry name" value="CKK"/>
    <property type="match status" value="1"/>
</dbReference>
<sequence>MEDGGLGMDAELGADSARRKMEAAGEALEIVPLEMYDSARAKIAANLRWLFAKAFGIDHIPEDLRDPFYRDQYEQEHIKPPVIRLLLSCELYCRVCALILKGDQVASLQSHQSVIQALSRKGIYVMEDDDTPVTDSDLTCQPIKMSSHIPMIDALMMAYTVEMISIEKVVSCVKRFSTFSASKELPFDLEDAMIFWINKVNLKMREITEKEHKSKQHLLESPSHQKSPSKWYWKLVPVRYRRDHASGRQLPYFQMLEDLIRDVCDGAALLTVVHYYCPELMKLDDICLKEVTSIADSLYNIQLLKEFANEYLNKSFYLTLEDLLYAPPVLKHNVMVFIAELFWWFEIVKPEFVQPRDVQEFKDARAVSQPKSARPTVPISNATKRSFLVSPGAADPVLPVQNSPEVCNSNKGSSGFSPSHPLLPLRQRQKKAQPAEESTACRNRSNSLTQEGHPRGSVAWSDKRQRPLSQLNRYVLHSATDSDADLASGDSVSLTCSISEDSLASTVTPKHQSHPGQGSVRRINGHSLLGNVNMDEEEELVAIARADPSKNDITLTNSEDTERQGVTPGAKSIWGRQEDASSDSRTASFFLEPLMPAVLRPAKEKSISLNKEEESGEGRQRGSTRRVAGAESAASSTRRRPPQTLNRTFTPNTSSEFETTIEPKSSEFVPPAPGQMQAFRPLVTSSVEPSSAERSPGFYLHSSVTEEKRPVQAWDAHPGTSDIETVETIEEQDAELTKELHPDKKQHFEEEVESAKLREDMNVKEHEDKDGGSRCSSPGQQSQVSSVASGSIRMTSFAERKMQRFGSNQDIRSSTSSSQRTTPDGSESCPLPLTSWRMKRDQSPTPQNKDNANMLASELVQLHMQLEEKRRAIESQKKKMEILTARQRLKLGKAAFLHIVKKGKSDTLPQPTKSEFYLKEGQKLNEEKEVSSKDDTCVDALRDRSKEAEEPEKASCEWAGGGTVSSSPLDVEEEVDLNECNRSIELLNEAIGSIQQQMMQLSLQQEMLMKQNIQSPTSATSPLANDQINTSEPRVRASIHFVEPSGSPVVRKPPKLSSARPRSKPSELLLGKEHSKGQKSSTPTPTDSPSARSIQGGRTPKAESQDFVQSSVRSESFNKDKGNHKGTTFHLNDEANMRMVSREPSSVALGVTFEESMSLRDTETTFDDGTARDNLISSEDISRGKANLIEVDLSDLAANTDDESTNALDVTADGSDGEKKSGMGFFFKDEQKAEDELAKKRAAFLLKQQRKAEEARLRKQQLEAESEQKRDETRRKAEEERIRKEEEKARRELIKQEYLRKKQLELCEEQEQPQPKPKTKPKKQRLKSVVKEEPSIDPLPKCPAANENLISAQSGSSLSLASVATTEPDSVNSGGAGSQRGESVESFPGLSRNSSRTTERDWDNGSTASSITSTSMAEYTGPKLFKEPSAKSNKPIIHNAISHCCLAGKVNEPQKNSILEELERCESNHLMILFRDSGCQFRALYSYFPDTEEIHKLTGTGPKSITKKMIDKLYKYSSDRKQFTVIPAKTVSVSVDALTIHNHLWQAKRPAGPKKSAK</sequence>